<accession>Q830S9</accession>
<evidence type="ECO:0000255" key="1">
    <source>
        <dbReference type="PROSITE-ProRule" id="PRU00977"/>
    </source>
</evidence>
<evidence type="ECO:0000305" key="2"/>
<evidence type="ECO:0007829" key="3">
    <source>
        <dbReference type="PDB" id="1YWL"/>
    </source>
</evidence>
<name>Y2693_ENTFA</name>
<organism>
    <name type="scientific">Enterococcus faecalis (strain ATCC 700802 / V583)</name>
    <dbReference type="NCBI Taxonomy" id="226185"/>
    <lineage>
        <taxon>Bacteria</taxon>
        <taxon>Bacillati</taxon>
        <taxon>Bacillota</taxon>
        <taxon>Bacilli</taxon>
        <taxon>Lactobacillales</taxon>
        <taxon>Enterococcaceae</taxon>
        <taxon>Enterococcus</taxon>
    </lineage>
</organism>
<feature type="chain" id="PRO_0000161361" description="UPF0213 protein EF_2693">
    <location>
        <begin position="1"/>
        <end position="88"/>
    </location>
</feature>
<feature type="domain" description="GIY-YIG" evidence="1">
    <location>
        <begin position="5"/>
        <end position="82"/>
    </location>
</feature>
<feature type="strand" evidence="3">
    <location>
        <begin position="3"/>
        <end position="13"/>
    </location>
</feature>
<feature type="strand" evidence="3">
    <location>
        <begin position="20"/>
        <end position="25"/>
    </location>
</feature>
<feature type="helix" evidence="3">
    <location>
        <begin position="27"/>
        <end position="38"/>
    </location>
</feature>
<feature type="strand" evidence="3">
    <location>
        <begin position="52"/>
        <end position="61"/>
    </location>
</feature>
<feature type="helix" evidence="3">
    <location>
        <begin position="62"/>
        <end position="74"/>
    </location>
</feature>
<feature type="helix" evidence="3">
    <location>
        <begin position="77"/>
        <end position="88"/>
    </location>
</feature>
<proteinExistence type="evidence at protein level"/>
<keyword id="KW-0002">3D-structure</keyword>
<keyword id="KW-1185">Reference proteome</keyword>
<protein>
    <recommendedName>
        <fullName>UPF0213 protein EF_2693</fullName>
    </recommendedName>
</protein>
<dbReference type="EMBL" id="AE016830">
    <property type="protein sequence ID" value="AAO82397.1"/>
    <property type="molecule type" value="Genomic_DNA"/>
</dbReference>
<dbReference type="RefSeq" id="NP_816327.1">
    <property type="nucleotide sequence ID" value="NC_004668.1"/>
</dbReference>
<dbReference type="RefSeq" id="WP_002379749.1">
    <property type="nucleotide sequence ID" value="NZ_KE136528.1"/>
</dbReference>
<dbReference type="PDB" id="1YWL">
    <property type="method" value="NMR"/>
    <property type="chains" value="A=1-88"/>
</dbReference>
<dbReference type="PDBsum" id="1YWL"/>
<dbReference type="SMR" id="Q830S9"/>
<dbReference type="STRING" id="226185.EF_2693"/>
<dbReference type="EnsemblBacteria" id="AAO82397">
    <property type="protein sequence ID" value="AAO82397"/>
    <property type="gene ID" value="EF_2693"/>
</dbReference>
<dbReference type="KEGG" id="efa:EF2693"/>
<dbReference type="PATRIC" id="fig|226185.45.peg.869"/>
<dbReference type="eggNOG" id="COG2827">
    <property type="taxonomic scope" value="Bacteria"/>
</dbReference>
<dbReference type="HOGENOM" id="CLU_135650_0_3_9"/>
<dbReference type="EvolutionaryTrace" id="Q830S9"/>
<dbReference type="Proteomes" id="UP000001415">
    <property type="component" value="Chromosome"/>
</dbReference>
<dbReference type="CDD" id="cd10456">
    <property type="entry name" value="GIY-YIG_UPF0213"/>
    <property type="match status" value="1"/>
</dbReference>
<dbReference type="Gene3D" id="3.40.1440.10">
    <property type="entry name" value="GIY-YIG endonuclease"/>
    <property type="match status" value="1"/>
</dbReference>
<dbReference type="InterPro" id="IPR000305">
    <property type="entry name" value="GIY-YIG_endonuc"/>
</dbReference>
<dbReference type="InterPro" id="IPR035901">
    <property type="entry name" value="GIY-YIG_endonuc_sf"/>
</dbReference>
<dbReference type="InterPro" id="IPR050190">
    <property type="entry name" value="UPF0213_domain"/>
</dbReference>
<dbReference type="PANTHER" id="PTHR34477">
    <property type="entry name" value="UPF0213 PROTEIN YHBQ"/>
    <property type="match status" value="1"/>
</dbReference>
<dbReference type="PANTHER" id="PTHR34477:SF1">
    <property type="entry name" value="UPF0213 PROTEIN YHBQ"/>
    <property type="match status" value="1"/>
</dbReference>
<dbReference type="Pfam" id="PF01541">
    <property type="entry name" value="GIY-YIG"/>
    <property type="match status" value="1"/>
</dbReference>
<dbReference type="SUPFAM" id="SSF82771">
    <property type="entry name" value="GIY-YIG endonuclease"/>
    <property type="match status" value="1"/>
</dbReference>
<dbReference type="PROSITE" id="PS50164">
    <property type="entry name" value="GIY_YIG"/>
    <property type="match status" value="1"/>
</dbReference>
<gene>
    <name type="ordered locus">EF_2693</name>
</gene>
<comment type="similarity">
    <text evidence="2">Belongs to the UPF0213 family.</text>
</comment>
<sequence length="88" mass="10409">MENKKSHYFYVLLCQDGSFYGGYTTEPERRLTEHNSGTGAKYTRLAKRRPVIMIHTEKFETRSEATKAEAAFKKLTRKQKEQYLKTFH</sequence>
<reference key="1">
    <citation type="journal article" date="2003" name="Science">
        <title>Role of mobile DNA in the evolution of vancomycin-resistant Enterococcus faecalis.</title>
        <authorList>
            <person name="Paulsen I.T."/>
            <person name="Banerjei L."/>
            <person name="Myers G.S.A."/>
            <person name="Nelson K.E."/>
            <person name="Seshadri R."/>
            <person name="Read T.D."/>
            <person name="Fouts D.E."/>
            <person name="Eisen J.A."/>
            <person name="Gill S.R."/>
            <person name="Heidelberg J.F."/>
            <person name="Tettelin H."/>
            <person name="Dodson R.J."/>
            <person name="Umayam L.A."/>
            <person name="Brinkac L.M."/>
            <person name="Beanan M.J."/>
            <person name="Daugherty S.C."/>
            <person name="DeBoy R.T."/>
            <person name="Durkin S.A."/>
            <person name="Kolonay J.F."/>
            <person name="Madupu R."/>
            <person name="Nelson W.C."/>
            <person name="Vamathevan J.J."/>
            <person name="Tran B."/>
            <person name="Upton J."/>
            <person name="Hansen T."/>
            <person name="Shetty J."/>
            <person name="Khouri H.M."/>
            <person name="Utterback T.R."/>
            <person name="Radune D."/>
            <person name="Ketchum K.A."/>
            <person name="Dougherty B.A."/>
            <person name="Fraser C.M."/>
        </authorList>
    </citation>
    <scope>NUCLEOTIDE SEQUENCE [LARGE SCALE GENOMIC DNA]</scope>
    <source>
        <strain>ATCC 700802 / V583</strain>
    </source>
</reference>